<feature type="chain" id="PRO_0000341484" description="Homeobox protein homothorax">
    <location>
        <begin position="1"/>
        <end position="487"/>
    </location>
</feature>
<feature type="domain" description="MEIS N-terminal" evidence="1">
    <location>
        <begin position="127"/>
        <end position="211"/>
    </location>
</feature>
<feature type="DNA-binding region" description="Homeobox; TALE-type" evidence="2">
    <location>
        <begin position="365"/>
        <end position="427"/>
    </location>
</feature>
<feature type="region of interest" description="Disordered" evidence="3">
    <location>
        <begin position="25"/>
        <end position="49"/>
    </location>
</feature>
<feature type="region of interest" description="Disordered" evidence="3">
    <location>
        <begin position="210"/>
        <end position="292"/>
    </location>
</feature>
<feature type="region of interest" description="Disordered" evidence="3">
    <location>
        <begin position="333"/>
        <end position="369"/>
    </location>
</feature>
<feature type="compositionally biased region" description="Polar residues" evidence="3">
    <location>
        <begin position="227"/>
        <end position="237"/>
    </location>
</feature>
<feature type="compositionally biased region" description="Polar residues" evidence="3">
    <location>
        <begin position="333"/>
        <end position="345"/>
    </location>
</feature>
<feature type="splice variant" id="VSP_052821" description="In isoform H." evidence="9 11">
    <location>
        <begin position="1"/>
        <end position="14"/>
    </location>
</feature>
<feature type="splice variant" id="VSP_052822" description="In isoform E." evidence="10 13">
    <original>RPPSSSLSYGGAMNDDARSPGAGS</original>
    <variation>PSTQDFSPLEETYASYRIKHEADF</variation>
    <location>
        <begin position="243"/>
        <end position="266"/>
    </location>
</feature>
<feature type="splice variant" id="VSP_052823" description="In isoform F." evidence="10 13">
    <original>RPPSSSLSYGGAMNDDARSPGAGS</original>
    <variation>VSTPFAGAHGPILASYNAVVHPCS</variation>
    <location>
        <begin position="243"/>
        <end position="266"/>
    </location>
</feature>
<feature type="splice variant" id="VSP_052824" description="In isoform E and isoform F." evidence="10 13">
    <location>
        <begin position="267"/>
        <end position="487"/>
    </location>
</feature>
<feature type="splice variant" id="VSP_052826" description="In isoform A and isoform H." evidence="9 11 12 13">
    <location>
        <begin position="284"/>
        <end position="398"/>
    </location>
</feature>
<dbReference type="EMBL" id="AF026788">
    <property type="protein sequence ID" value="AAC47759.1"/>
    <property type="molecule type" value="mRNA"/>
</dbReference>
<dbReference type="EMBL" id="AF032865">
    <property type="protein sequence ID" value="AAB97169.1"/>
    <property type="molecule type" value="mRNA"/>
</dbReference>
<dbReference type="EMBL" id="AF035825">
    <property type="protein sequence ID" value="AAB88514.1"/>
    <property type="molecule type" value="mRNA"/>
</dbReference>
<dbReference type="EMBL" id="AF036584">
    <property type="protein sequence ID" value="AAB88863.1"/>
    <property type="molecule type" value="mRNA"/>
</dbReference>
<dbReference type="EMBL" id="AE014297">
    <property type="protein sequence ID" value="AAF54533.2"/>
    <property type="molecule type" value="Genomic_DNA"/>
</dbReference>
<dbReference type="EMBL" id="AE014297">
    <property type="protein sequence ID" value="AAN13474.1"/>
    <property type="molecule type" value="Genomic_DNA"/>
</dbReference>
<dbReference type="EMBL" id="AE014297">
    <property type="protein sequence ID" value="AAN13475.2"/>
    <property type="molecule type" value="Genomic_DNA"/>
</dbReference>
<dbReference type="EMBL" id="AE014297">
    <property type="protein sequence ID" value="AAX52943.2"/>
    <property type="molecule type" value="Genomic_DNA"/>
</dbReference>
<dbReference type="EMBL" id="AE014297">
    <property type="protein sequence ID" value="AAZ52527.1"/>
    <property type="molecule type" value="Genomic_DNA"/>
</dbReference>
<dbReference type="EMBL" id="BT010238">
    <property type="protein sequence ID" value="AAQ23556.1"/>
    <property type="status" value="ALT_FRAME"/>
    <property type="molecule type" value="mRNA"/>
</dbReference>
<dbReference type="EMBL" id="BT024210">
    <property type="protein sequence ID" value="ABC86272.1"/>
    <property type="molecule type" value="mRNA"/>
</dbReference>
<dbReference type="EMBL" id="BT029117">
    <property type="protein sequence ID" value="ABJ17050.1"/>
    <property type="molecule type" value="mRNA"/>
</dbReference>
<dbReference type="RefSeq" id="NP_001014613.2">
    <molecule id="O46339-5"/>
    <property type="nucleotide sequence ID" value="NM_001014613.3"/>
</dbReference>
<dbReference type="RefSeq" id="NP_001027170.1">
    <molecule id="O46339-6"/>
    <property type="nucleotide sequence ID" value="NM_001031999.2"/>
</dbReference>
<dbReference type="RefSeq" id="NP_476576.1">
    <molecule id="O46339-1"/>
    <property type="nucleotide sequence ID" value="NM_057228.5"/>
</dbReference>
<dbReference type="RefSeq" id="NP_476577.3">
    <molecule id="O46339-6"/>
    <property type="nucleotide sequence ID" value="NM_057229.5"/>
</dbReference>
<dbReference type="RefSeq" id="NP_476578.3">
    <property type="nucleotide sequence ID" value="NM_057230.6"/>
</dbReference>
<dbReference type="SMR" id="O46339"/>
<dbReference type="BioGRID" id="66419">
    <property type="interactions" value="57"/>
</dbReference>
<dbReference type="FunCoup" id="O46339">
    <property type="interactions" value="451"/>
</dbReference>
<dbReference type="IntAct" id="O46339">
    <property type="interactions" value="64"/>
</dbReference>
<dbReference type="STRING" id="7227.FBpp0081732"/>
<dbReference type="GlyGen" id="O46339">
    <property type="glycosylation" value="1 site"/>
</dbReference>
<dbReference type="PaxDb" id="7227-FBpp0081732"/>
<dbReference type="DNASU" id="41273"/>
<dbReference type="EnsemblMetazoa" id="FBtr0082255">
    <molecule id="O46339-1"/>
    <property type="protein sequence ID" value="FBpp0081732"/>
    <property type="gene ID" value="FBgn0001235"/>
</dbReference>
<dbReference type="EnsemblMetazoa" id="FBtr0100454">
    <molecule id="O46339-5"/>
    <property type="protein sequence ID" value="FBpp0099878"/>
    <property type="gene ID" value="FBgn0001235"/>
</dbReference>
<dbReference type="EnsemblMetazoa" id="FBtr0100455">
    <molecule id="O46339-6"/>
    <property type="protein sequence ID" value="FBpp0099879"/>
    <property type="gene ID" value="FBgn0001235"/>
</dbReference>
<dbReference type="EnsemblMetazoa" id="FBtr0344145">
    <molecule id="O46339-6"/>
    <property type="protein sequence ID" value="FBpp0310558"/>
    <property type="gene ID" value="FBgn0001235"/>
</dbReference>
<dbReference type="GeneID" id="41273"/>
<dbReference type="KEGG" id="dme:Dmel_CG17117"/>
<dbReference type="AGR" id="FB:FBgn0001235"/>
<dbReference type="CTD" id="41273"/>
<dbReference type="FlyBase" id="FBgn0001235">
    <property type="gene designation" value="hth"/>
</dbReference>
<dbReference type="VEuPathDB" id="VectorBase:FBgn0001235"/>
<dbReference type="eggNOG" id="KOG0773">
    <property type="taxonomic scope" value="Eukaryota"/>
</dbReference>
<dbReference type="GeneTree" id="ENSGT00940000168996"/>
<dbReference type="InParanoid" id="O46339"/>
<dbReference type="OMA" id="TNHANAM"/>
<dbReference type="OrthoDB" id="10056939at2759"/>
<dbReference type="PhylomeDB" id="O46339"/>
<dbReference type="Reactome" id="R-DME-390193">
    <property type="pathway name" value="Transcriptional activation by YKI"/>
</dbReference>
<dbReference type="SignaLink" id="O46339"/>
<dbReference type="BioGRID-ORCS" id="41273">
    <property type="hits" value="0 hits in 3 CRISPR screens"/>
</dbReference>
<dbReference type="ChiTaRS" id="hth">
    <property type="organism name" value="fly"/>
</dbReference>
<dbReference type="GenomeRNAi" id="41273"/>
<dbReference type="PRO" id="PR:O46339"/>
<dbReference type="Proteomes" id="UP000000803">
    <property type="component" value="Chromosome 3R"/>
</dbReference>
<dbReference type="Bgee" id="FBgn0001235">
    <property type="expression patterns" value="Expressed in epithelial cell in antenna and 297 other cell types or tissues"/>
</dbReference>
<dbReference type="ExpressionAtlas" id="O46339">
    <property type="expression patterns" value="baseline and differential"/>
</dbReference>
<dbReference type="GO" id="GO:0005737">
    <property type="term" value="C:cytoplasm"/>
    <property type="evidence" value="ECO:0000314"/>
    <property type="project" value="FlyBase"/>
</dbReference>
<dbReference type="GO" id="GO:0005829">
    <property type="term" value="C:cytosol"/>
    <property type="evidence" value="ECO:0007005"/>
    <property type="project" value="FlyBase"/>
</dbReference>
<dbReference type="GO" id="GO:0005654">
    <property type="term" value="C:nucleoplasm"/>
    <property type="evidence" value="ECO:0000304"/>
    <property type="project" value="Reactome"/>
</dbReference>
<dbReference type="GO" id="GO:0005634">
    <property type="term" value="C:nucleus"/>
    <property type="evidence" value="ECO:0000314"/>
    <property type="project" value="FlyBase"/>
</dbReference>
<dbReference type="GO" id="GO:0032993">
    <property type="term" value="C:protein-DNA complex"/>
    <property type="evidence" value="ECO:0000314"/>
    <property type="project" value="CAFA"/>
</dbReference>
<dbReference type="GO" id="GO:0090575">
    <property type="term" value="C:RNA polymerase II transcription regulator complex"/>
    <property type="evidence" value="ECO:0000353"/>
    <property type="project" value="FlyBase"/>
</dbReference>
<dbReference type="GO" id="GO:0005667">
    <property type="term" value="C:transcription regulator complex"/>
    <property type="evidence" value="ECO:0000314"/>
    <property type="project" value="UniProtKB"/>
</dbReference>
<dbReference type="GO" id="GO:0000987">
    <property type="term" value="F:cis-regulatory region sequence-specific DNA binding"/>
    <property type="evidence" value="ECO:0000314"/>
    <property type="project" value="FlyBase"/>
</dbReference>
<dbReference type="GO" id="GO:0003677">
    <property type="term" value="F:DNA binding"/>
    <property type="evidence" value="ECO:0000314"/>
    <property type="project" value="UniProtKB"/>
</dbReference>
<dbReference type="GO" id="GO:0001228">
    <property type="term" value="F:DNA-binding transcription activator activity, RNA polymerase II-specific"/>
    <property type="evidence" value="ECO:0000318"/>
    <property type="project" value="GO_Central"/>
</dbReference>
<dbReference type="GO" id="GO:0003700">
    <property type="term" value="F:DNA-binding transcription factor activity"/>
    <property type="evidence" value="ECO:0000315"/>
    <property type="project" value="UniProtKB"/>
</dbReference>
<dbReference type="GO" id="GO:0000981">
    <property type="term" value="F:DNA-binding transcription factor activity, RNA polymerase II-specific"/>
    <property type="evidence" value="ECO:0000314"/>
    <property type="project" value="FlyBase"/>
</dbReference>
<dbReference type="GO" id="GO:0140297">
    <property type="term" value="F:DNA-binding transcription factor binding"/>
    <property type="evidence" value="ECO:0000353"/>
    <property type="project" value="FlyBase"/>
</dbReference>
<dbReference type="GO" id="GO:0046982">
    <property type="term" value="F:protein heterodimerization activity"/>
    <property type="evidence" value="ECO:0000314"/>
    <property type="project" value="CAFA"/>
</dbReference>
<dbReference type="GO" id="GO:0001223">
    <property type="term" value="F:transcription coactivator binding"/>
    <property type="evidence" value="ECO:0000353"/>
    <property type="project" value="FlyBase"/>
</dbReference>
<dbReference type="GO" id="GO:0009887">
    <property type="term" value="P:animal organ morphogenesis"/>
    <property type="evidence" value="ECO:0000318"/>
    <property type="project" value="GO_Central"/>
</dbReference>
<dbReference type="GO" id="GO:0007420">
    <property type="term" value="P:brain development"/>
    <property type="evidence" value="ECO:0000315"/>
    <property type="project" value="FlyBase"/>
</dbReference>
<dbReference type="GO" id="GO:0048749">
    <property type="term" value="P:compound eye development"/>
    <property type="evidence" value="ECO:0000315"/>
    <property type="project" value="FlyBase"/>
</dbReference>
<dbReference type="GO" id="GO:0001752">
    <property type="term" value="P:compound eye photoreceptor fate commitment"/>
    <property type="evidence" value="ECO:0000315"/>
    <property type="project" value="FlyBase"/>
</dbReference>
<dbReference type="GO" id="GO:0009880">
    <property type="term" value="P:embryonic pattern specification"/>
    <property type="evidence" value="ECO:0000318"/>
    <property type="project" value="GO_Central"/>
</dbReference>
<dbReference type="GO" id="GO:0001654">
    <property type="term" value="P:eye development"/>
    <property type="evidence" value="ECO:0000315"/>
    <property type="project" value="UniProtKB"/>
</dbReference>
<dbReference type="GO" id="GO:0048735">
    <property type="term" value="P:haltere morphogenesis"/>
    <property type="evidence" value="ECO:0000315"/>
    <property type="project" value="FlyBase"/>
</dbReference>
<dbReference type="GO" id="GO:0060323">
    <property type="term" value="P:head morphogenesis"/>
    <property type="evidence" value="ECO:0000315"/>
    <property type="project" value="FlyBase"/>
</dbReference>
<dbReference type="GO" id="GO:0007480">
    <property type="term" value="P:imaginal disc-derived leg morphogenesis"/>
    <property type="evidence" value="ECO:0000315"/>
    <property type="project" value="FlyBase"/>
</dbReference>
<dbReference type="GO" id="GO:0007476">
    <property type="term" value="P:imaginal disc-derived wing morphogenesis"/>
    <property type="evidence" value="ECO:0000315"/>
    <property type="project" value="FlyBase"/>
</dbReference>
<dbReference type="GO" id="GO:0072002">
    <property type="term" value="P:Malpighian tubule development"/>
    <property type="evidence" value="ECO:0000315"/>
    <property type="project" value="FlyBase"/>
</dbReference>
<dbReference type="GO" id="GO:0001742">
    <property type="term" value="P:oenocyte differentiation"/>
    <property type="evidence" value="ECO:0000315"/>
    <property type="project" value="FlyBase"/>
</dbReference>
<dbReference type="GO" id="GO:0007422">
    <property type="term" value="P:peripheral nervous system development"/>
    <property type="evidence" value="ECO:0000315"/>
    <property type="project" value="UniProtKB"/>
</dbReference>
<dbReference type="GO" id="GO:0008284">
    <property type="term" value="P:positive regulation of cell population proliferation"/>
    <property type="evidence" value="ECO:0000318"/>
    <property type="project" value="GO_Central"/>
</dbReference>
<dbReference type="GO" id="GO:2000497">
    <property type="term" value="P:positive regulation of cell proliferation involved in compound eye morphogenesis"/>
    <property type="evidence" value="ECO:0000315"/>
    <property type="project" value="FlyBase"/>
</dbReference>
<dbReference type="GO" id="GO:0045944">
    <property type="term" value="P:positive regulation of transcription by RNA polymerase II"/>
    <property type="evidence" value="ECO:0000314"/>
    <property type="project" value="FlyBase"/>
</dbReference>
<dbReference type="GO" id="GO:0034504">
    <property type="term" value="P:protein localization to nucleus"/>
    <property type="evidence" value="ECO:0000353"/>
    <property type="project" value="FlyBase"/>
</dbReference>
<dbReference type="GO" id="GO:0009954">
    <property type="term" value="P:proximal/distal pattern formation"/>
    <property type="evidence" value="ECO:0000304"/>
    <property type="project" value="FlyBase"/>
</dbReference>
<dbReference type="GO" id="GO:0042659">
    <property type="term" value="P:regulation of cell fate specification"/>
    <property type="evidence" value="ECO:0000315"/>
    <property type="project" value="FlyBase"/>
</dbReference>
<dbReference type="GO" id="GO:0045664">
    <property type="term" value="P:regulation of neuron differentiation"/>
    <property type="evidence" value="ECO:0000315"/>
    <property type="project" value="FlyBase"/>
</dbReference>
<dbReference type="GO" id="GO:0006357">
    <property type="term" value="P:regulation of transcription by RNA polymerase II"/>
    <property type="evidence" value="ECO:0000315"/>
    <property type="project" value="UniProtKB"/>
</dbReference>
<dbReference type="GO" id="GO:0007432">
    <property type="term" value="P:salivary gland boundary specification"/>
    <property type="evidence" value="ECO:0000304"/>
    <property type="project" value="FlyBase"/>
</dbReference>
<dbReference type="GO" id="GO:0035282">
    <property type="term" value="P:segmentation"/>
    <property type="evidence" value="ECO:0000315"/>
    <property type="project" value="FlyBase"/>
</dbReference>
<dbReference type="GO" id="GO:0007525">
    <property type="term" value="P:somatic muscle development"/>
    <property type="evidence" value="ECO:0000315"/>
    <property type="project" value="FlyBase"/>
</dbReference>
<dbReference type="GO" id="GO:0010092">
    <property type="term" value="P:specification of animal organ identity"/>
    <property type="evidence" value="ECO:0000304"/>
    <property type="project" value="FlyBase"/>
</dbReference>
<dbReference type="GO" id="GO:0007383">
    <property type="term" value="P:specification of segmental identity, antennal segment"/>
    <property type="evidence" value="ECO:0000315"/>
    <property type="project" value="FlyBase"/>
</dbReference>
<dbReference type="GO" id="GO:0007380">
    <property type="term" value="P:specification of segmental identity, head"/>
    <property type="evidence" value="ECO:0000315"/>
    <property type="project" value="FlyBase"/>
</dbReference>
<dbReference type="CDD" id="cd00086">
    <property type="entry name" value="homeodomain"/>
    <property type="match status" value="1"/>
</dbReference>
<dbReference type="FunFam" id="1.10.10.60:FF:000004">
    <property type="entry name" value="Meis2 homeobox isoform 2c"/>
    <property type="match status" value="1"/>
</dbReference>
<dbReference type="Gene3D" id="1.10.10.60">
    <property type="entry name" value="Homeodomain-like"/>
    <property type="match status" value="1"/>
</dbReference>
<dbReference type="InterPro" id="IPR001356">
    <property type="entry name" value="HD"/>
</dbReference>
<dbReference type="InterPro" id="IPR009057">
    <property type="entry name" value="Homeodomain-like_sf"/>
</dbReference>
<dbReference type="InterPro" id="IPR008422">
    <property type="entry name" value="KN_HD"/>
</dbReference>
<dbReference type="InterPro" id="IPR032453">
    <property type="entry name" value="PKNOX/Meis_N"/>
</dbReference>
<dbReference type="InterPro" id="IPR050224">
    <property type="entry name" value="TALE_homeobox"/>
</dbReference>
<dbReference type="PANTHER" id="PTHR11850">
    <property type="entry name" value="HOMEOBOX PROTEIN TRANSCRIPTION FACTORS"/>
    <property type="match status" value="1"/>
</dbReference>
<dbReference type="Pfam" id="PF05920">
    <property type="entry name" value="Homeobox_KN"/>
    <property type="match status" value="1"/>
</dbReference>
<dbReference type="Pfam" id="PF16493">
    <property type="entry name" value="Meis_PKNOX_N"/>
    <property type="match status" value="1"/>
</dbReference>
<dbReference type="SMART" id="SM00389">
    <property type="entry name" value="HOX"/>
    <property type="match status" value="1"/>
</dbReference>
<dbReference type="SUPFAM" id="SSF46689">
    <property type="entry name" value="Homeodomain-like"/>
    <property type="match status" value="1"/>
</dbReference>
<dbReference type="PROSITE" id="PS50071">
    <property type="entry name" value="HOMEOBOX_2"/>
    <property type="match status" value="1"/>
</dbReference>
<name>HTH_DROME</name>
<organism>
    <name type="scientific">Drosophila melanogaster</name>
    <name type="common">Fruit fly</name>
    <dbReference type="NCBI Taxonomy" id="7227"/>
    <lineage>
        <taxon>Eukaryota</taxon>
        <taxon>Metazoa</taxon>
        <taxon>Ecdysozoa</taxon>
        <taxon>Arthropoda</taxon>
        <taxon>Hexapoda</taxon>
        <taxon>Insecta</taxon>
        <taxon>Pterygota</taxon>
        <taxon>Neoptera</taxon>
        <taxon>Endopterygota</taxon>
        <taxon>Diptera</taxon>
        <taxon>Brachycera</taxon>
        <taxon>Muscomorpha</taxon>
        <taxon>Ephydroidea</taxon>
        <taxon>Drosophilidae</taxon>
        <taxon>Drosophila</taxon>
        <taxon>Sophophora</taxon>
    </lineage>
</organism>
<proteinExistence type="evidence at protein level"/>
<protein>
    <recommendedName>
        <fullName>Homeobox protein homothorax</fullName>
    </recommendedName>
    <alternativeName>
        <fullName>Homeobox protein dorsotonals</fullName>
    </alternativeName>
</protein>
<reference evidence="14 17" key="1">
    <citation type="journal article" date="1997" name="Cell">
        <title>Nuclear translocation of extradenticle requires homothorax, which encodes an extradenticle-related homeodomain protein.</title>
        <authorList>
            <person name="Rieckhof G.E."/>
            <person name="Casares F."/>
            <person name="Ryoo H.D."/>
            <person name="Abu-Shaar M."/>
            <person name="Mann R.S."/>
        </authorList>
    </citation>
    <scope>NUCLEOTIDE SEQUENCE [MRNA] (ISOFORM H)</scope>
    <scope>FUNCTION</scope>
    <scope>INTERACTION WITH EXD</scope>
    <scope>SUBCELLULAR LOCATION</scope>
    <scope>DISRUPTION PHENOTYPE</scope>
    <source>
        <tissue evidence="17">Antenna</tissue>
    </source>
</reference>
<reference evidence="14 16" key="2">
    <citation type="journal article" date="1998" name="Development">
        <title>Dorsotonals/homothorax, the Drosophila homologue of meis1, interacts with extradenticle in patterning of the embryonic PNS.</title>
        <authorList>
            <person name="Kurant E."/>
            <person name="Pai C.-Y."/>
            <person name="Sharf R."/>
            <person name="Halachmi N."/>
            <person name="Sun Y.H."/>
            <person name="Salzberg A."/>
        </authorList>
    </citation>
    <scope>NUCLEOTIDE SEQUENCE [MRNA] (ISOFORM C)</scope>
    <scope>FUNCTION</scope>
    <scope>INTERACTION WITH EXD</scope>
    <scope>SUBCELLULAR LOCATION</scope>
</reference>
<reference evidence="14 15" key="3">
    <citation type="journal article" date="1998" name="Genes Dev.">
        <title>The Homothorax homeoprotein activates the nuclear localization of another homeoprotein, extradenticle, and suppresses eye development in Drosophila.</title>
        <authorList>
            <person name="Pai C.-Y."/>
            <person name="Kuo T.-S."/>
            <person name="Jaw T.J."/>
            <person name="Kurant E."/>
            <person name="Chen C.-T."/>
            <person name="Bessarab D.A."/>
            <person name="Salzberg A."/>
            <person name="Sun Y.H."/>
        </authorList>
    </citation>
    <scope>NUCLEOTIDE SEQUENCE [MRNA] (ISOFORMS A AND C)</scope>
    <scope>FUNCTION</scope>
    <scope>INTERACTION WITH EXD</scope>
    <scope>SUBCELLULAR LOCATION</scope>
    <scope>TISSUE SPECIFICITY</scope>
</reference>
<reference evidence="18" key="4">
    <citation type="journal article" date="2000" name="Science">
        <title>The genome sequence of Drosophila melanogaster.</title>
        <authorList>
            <person name="Adams M.D."/>
            <person name="Celniker S.E."/>
            <person name="Holt R.A."/>
            <person name="Evans C.A."/>
            <person name="Gocayne J.D."/>
            <person name="Amanatides P.G."/>
            <person name="Scherer S.E."/>
            <person name="Li P.W."/>
            <person name="Hoskins R.A."/>
            <person name="Galle R.F."/>
            <person name="George R.A."/>
            <person name="Lewis S.E."/>
            <person name="Richards S."/>
            <person name="Ashburner M."/>
            <person name="Henderson S.N."/>
            <person name="Sutton G.G."/>
            <person name="Wortman J.R."/>
            <person name="Yandell M.D."/>
            <person name="Zhang Q."/>
            <person name="Chen L.X."/>
            <person name="Brandon R.C."/>
            <person name="Rogers Y.-H.C."/>
            <person name="Blazej R.G."/>
            <person name="Champe M."/>
            <person name="Pfeiffer B.D."/>
            <person name="Wan K.H."/>
            <person name="Doyle C."/>
            <person name="Baxter E.G."/>
            <person name="Helt G."/>
            <person name="Nelson C.R."/>
            <person name="Miklos G.L.G."/>
            <person name="Abril J.F."/>
            <person name="Agbayani A."/>
            <person name="An H.-J."/>
            <person name="Andrews-Pfannkoch C."/>
            <person name="Baldwin D."/>
            <person name="Ballew R.M."/>
            <person name="Basu A."/>
            <person name="Baxendale J."/>
            <person name="Bayraktaroglu L."/>
            <person name="Beasley E.M."/>
            <person name="Beeson K.Y."/>
            <person name="Benos P.V."/>
            <person name="Berman B.P."/>
            <person name="Bhandari D."/>
            <person name="Bolshakov S."/>
            <person name="Borkova D."/>
            <person name="Botchan M.R."/>
            <person name="Bouck J."/>
            <person name="Brokstein P."/>
            <person name="Brottier P."/>
            <person name="Burtis K.C."/>
            <person name="Busam D.A."/>
            <person name="Butler H."/>
            <person name="Cadieu E."/>
            <person name="Center A."/>
            <person name="Chandra I."/>
            <person name="Cherry J.M."/>
            <person name="Cawley S."/>
            <person name="Dahlke C."/>
            <person name="Davenport L.B."/>
            <person name="Davies P."/>
            <person name="de Pablos B."/>
            <person name="Delcher A."/>
            <person name="Deng Z."/>
            <person name="Mays A.D."/>
            <person name="Dew I."/>
            <person name="Dietz S.M."/>
            <person name="Dodson K."/>
            <person name="Doup L.E."/>
            <person name="Downes M."/>
            <person name="Dugan-Rocha S."/>
            <person name="Dunkov B.C."/>
            <person name="Dunn P."/>
            <person name="Durbin K.J."/>
            <person name="Evangelista C.C."/>
            <person name="Ferraz C."/>
            <person name="Ferriera S."/>
            <person name="Fleischmann W."/>
            <person name="Fosler C."/>
            <person name="Gabrielian A.E."/>
            <person name="Garg N.S."/>
            <person name="Gelbart W.M."/>
            <person name="Glasser K."/>
            <person name="Glodek A."/>
            <person name="Gong F."/>
            <person name="Gorrell J.H."/>
            <person name="Gu Z."/>
            <person name="Guan P."/>
            <person name="Harris M."/>
            <person name="Harris N.L."/>
            <person name="Harvey D.A."/>
            <person name="Heiman T.J."/>
            <person name="Hernandez J.R."/>
            <person name="Houck J."/>
            <person name="Hostin D."/>
            <person name="Houston K.A."/>
            <person name="Howland T.J."/>
            <person name="Wei M.-H."/>
            <person name="Ibegwam C."/>
            <person name="Jalali M."/>
            <person name="Kalush F."/>
            <person name="Karpen G.H."/>
            <person name="Ke Z."/>
            <person name="Kennison J.A."/>
            <person name="Ketchum K.A."/>
            <person name="Kimmel B.E."/>
            <person name="Kodira C.D."/>
            <person name="Kraft C.L."/>
            <person name="Kravitz S."/>
            <person name="Kulp D."/>
            <person name="Lai Z."/>
            <person name="Lasko P."/>
            <person name="Lei Y."/>
            <person name="Levitsky A.A."/>
            <person name="Li J.H."/>
            <person name="Li Z."/>
            <person name="Liang Y."/>
            <person name="Lin X."/>
            <person name="Liu X."/>
            <person name="Mattei B."/>
            <person name="McIntosh T.C."/>
            <person name="McLeod M.P."/>
            <person name="McPherson D."/>
            <person name="Merkulov G."/>
            <person name="Milshina N.V."/>
            <person name="Mobarry C."/>
            <person name="Morris J."/>
            <person name="Moshrefi A."/>
            <person name="Mount S.M."/>
            <person name="Moy M."/>
            <person name="Murphy B."/>
            <person name="Murphy L."/>
            <person name="Muzny D.M."/>
            <person name="Nelson D.L."/>
            <person name="Nelson D.R."/>
            <person name="Nelson K.A."/>
            <person name="Nixon K."/>
            <person name="Nusskern D.R."/>
            <person name="Pacleb J.M."/>
            <person name="Palazzolo M."/>
            <person name="Pittman G.S."/>
            <person name="Pan S."/>
            <person name="Pollard J."/>
            <person name="Puri V."/>
            <person name="Reese M.G."/>
            <person name="Reinert K."/>
            <person name="Remington K."/>
            <person name="Saunders R.D.C."/>
            <person name="Scheeler F."/>
            <person name="Shen H."/>
            <person name="Shue B.C."/>
            <person name="Siden-Kiamos I."/>
            <person name="Simpson M."/>
            <person name="Skupski M.P."/>
            <person name="Smith T.J."/>
            <person name="Spier E."/>
            <person name="Spradling A.C."/>
            <person name="Stapleton M."/>
            <person name="Strong R."/>
            <person name="Sun E."/>
            <person name="Svirskas R."/>
            <person name="Tector C."/>
            <person name="Turner R."/>
            <person name="Venter E."/>
            <person name="Wang A.H."/>
            <person name="Wang X."/>
            <person name="Wang Z.-Y."/>
            <person name="Wassarman D.A."/>
            <person name="Weinstock G.M."/>
            <person name="Weissenbach J."/>
            <person name="Williams S.M."/>
            <person name="Woodage T."/>
            <person name="Worley K.C."/>
            <person name="Wu D."/>
            <person name="Yang S."/>
            <person name="Yao Q.A."/>
            <person name="Ye J."/>
            <person name="Yeh R.-F."/>
            <person name="Zaveri J.S."/>
            <person name="Zhan M."/>
            <person name="Zhang G."/>
            <person name="Zhao Q."/>
            <person name="Zheng L."/>
            <person name="Zheng X.H."/>
            <person name="Zhong F.N."/>
            <person name="Zhong W."/>
            <person name="Zhou X."/>
            <person name="Zhu S.C."/>
            <person name="Zhu X."/>
            <person name="Smith H.O."/>
            <person name="Gibbs R.A."/>
            <person name="Myers E.W."/>
            <person name="Rubin G.M."/>
            <person name="Venter J.C."/>
        </authorList>
    </citation>
    <scope>NUCLEOTIDE SEQUENCE [LARGE SCALE GENOMIC DNA]</scope>
    <source>
        <strain evidence="18">Berkeley</strain>
    </source>
</reference>
<reference evidence="14 18" key="5">
    <citation type="journal article" date="2002" name="Genome Biol.">
        <title>Annotation of the Drosophila melanogaster euchromatic genome: a systematic review.</title>
        <authorList>
            <person name="Misra S."/>
            <person name="Crosby M.A."/>
            <person name="Mungall C.J."/>
            <person name="Matthews B.B."/>
            <person name="Campbell K.S."/>
            <person name="Hradecky P."/>
            <person name="Huang Y."/>
            <person name="Kaminker J.S."/>
            <person name="Millburn G.H."/>
            <person name="Prochnik S.E."/>
            <person name="Smith C.D."/>
            <person name="Tupy J.L."/>
            <person name="Whitfield E.J."/>
            <person name="Bayraktaroglu L."/>
            <person name="Berman B.P."/>
            <person name="Bettencourt B.R."/>
            <person name="Celniker S.E."/>
            <person name="de Grey A.D.N.J."/>
            <person name="Drysdale R.A."/>
            <person name="Harris N.L."/>
            <person name="Richter J."/>
            <person name="Russo S."/>
            <person name="Schroeder A.J."/>
            <person name="Shu S.Q."/>
            <person name="Stapleton M."/>
            <person name="Yamada C."/>
            <person name="Ashburner M."/>
            <person name="Gelbart W.M."/>
            <person name="Rubin G.M."/>
            <person name="Lewis S.E."/>
        </authorList>
    </citation>
    <scope>GENOME REANNOTATION</scope>
    <scope>ALTERNATIVE SPLICING</scope>
    <source>
        <strain>Berkeley</strain>
    </source>
</reference>
<reference evidence="14 19" key="6">
    <citation type="submission" date="2006-10" db="EMBL/GenBank/DDBJ databases">
        <authorList>
            <person name="Stapleton M."/>
            <person name="Brokstein P."/>
            <person name="Hong L."/>
            <person name="Agbayani A."/>
            <person name="Carlson J.W."/>
            <person name="Champe M."/>
            <person name="Chavez C."/>
            <person name="Dorsett V."/>
            <person name="Dresnek D."/>
            <person name="Farfan D."/>
            <person name="Frise E."/>
            <person name="George R.A."/>
            <person name="Gonzalez M."/>
            <person name="Guarin H."/>
            <person name="Kapadia B."/>
            <person name="Kronmiller B."/>
            <person name="Li P.W."/>
            <person name="Liao G."/>
            <person name="Miranda A."/>
            <person name="Mungall C.J."/>
            <person name="Nunoo J."/>
            <person name="Pacleb J.M."/>
            <person name="Paragas V."/>
            <person name="Park S."/>
            <person name="Patel S."/>
            <person name="Phouanenavong S."/>
            <person name="Wan K.H."/>
            <person name="Yu C."/>
            <person name="Lewis S.E."/>
            <person name="Rubin G.M."/>
            <person name="Celniker S.E."/>
        </authorList>
    </citation>
    <scope>NUCLEOTIDE SEQUENCE [LARGE SCALE MRNA] (ISOFORMS E AND F)</scope>
    <source>
        <strain evidence="19">Berkeley</strain>
        <tissue>Embryo</tissue>
    </source>
</reference>
<reference evidence="14" key="7">
    <citation type="journal article" date="2003" name="Cell">
        <title>Homothorax switches function of Drosophila photoreceptors from color to polarized light sensors.</title>
        <authorList>
            <person name="Wernet M.F."/>
            <person name="Labhart T."/>
            <person name="Baumann F."/>
            <person name="Mazzoni E.O."/>
            <person name="Pichaud F."/>
            <person name="Desplan C."/>
        </authorList>
    </citation>
    <scope>FUNCTION</scope>
    <scope>TISSUE SPECIFICITY</scope>
</reference>
<reference evidence="14" key="8">
    <citation type="journal article" date="2006" name="Genes Dev.">
        <title>Distinct functions of homeodomain-containing and homeodomain-less isoforms encoded by homothorax.</title>
        <authorList>
            <person name="Noro B."/>
            <person name="Culi J."/>
            <person name="McKay D.J."/>
            <person name="Zhang W."/>
            <person name="Mann R.S."/>
        </authorList>
    </citation>
    <scope>FUNCTION</scope>
    <scope>INTERACTION WITH EXD</scope>
    <scope>ALTERNATIVE SPLICING</scope>
    <scope>TISSUE SPECIFICITY</scope>
    <scope>DEVELOPMENTAL STAGE</scope>
</reference>
<gene>
    <name evidence="20" type="primary">hth</name>
    <name evidence="16" type="synonym">dtl</name>
    <name type="ORF">CG17117</name>
</gene>
<keyword id="KW-0025">Alternative splicing</keyword>
<keyword id="KW-0217">Developmental protein</keyword>
<keyword id="KW-0238">DNA-binding</keyword>
<keyword id="KW-0371">Homeobox</keyword>
<keyword id="KW-0539">Nucleus</keyword>
<keyword id="KW-1185">Reference proteome</keyword>
<accession>O46339</accession>
<accession>O17427</accession>
<accession>Q058V1</accession>
<accession>Q4AB34</accession>
<accession>Q59DX7</accession>
<accession>Q6NR42</accession>
<accession>Q7KQ21</accession>
<accession>Q8INL5</accession>
<accession>Q8INL6</accession>
<accession>Q9VGY9</accession>
<sequence>MAQPRYDDGLHGYGMDSGAAAAAMYDPHAGHRPPGLQGLPSHHSPHMTHAAAAAATVGMHGYHSGAGGHGTPSHVSPVGNHLMGAIPEVHKRDKDAIYEHPLFPLLALIFEKCELATCTPREPGVQGGDVCSSESFNEDIAMFSKQIRSQKPYYTADPEVDSLMVQAIQVLRFHLLELEKVHELCDNFCHRYISCLKGKMPIDLVIDERDTTKPPELGSANGEGRSNADSTSHTDGASTPDVRPPSSSLSYGGAMNDDARSPGAGSTPGPLSQQPPALDTSDPDGKFLSSLNPSELTYDGRWCRREWSSPADARNADASRRLYSSVFLGSPDNFGTSASGDASNASIGSGEGTGEEDDDASGKKNQKKRGIFPKVATNILRAWLFQHLTHPYPSEDQKKQLAQDTGLTILQVNNWFINARRRIVQPMIDQSNRAVYTPHPGPSGYGHDAMGYMMDSQAHMMHRPPGDPGFHQGYPHYPPAEYYGQHL</sequence>
<evidence type="ECO:0000255" key="1"/>
<evidence type="ECO:0000255" key="2">
    <source>
        <dbReference type="PROSITE-ProRule" id="PRU00108"/>
    </source>
</evidence>
<evidence type="ECO:0000256" key="3">
    <source>
        <dbReference type="SAM" id="MobiDB-lite"/>
    </source>
</evidence>
<evidence type="ECO:0000269" key="4">
    <source>
    </source>
</evidence>
<evidence type="ECO:0000269" key="5">
    <source>
    </source>
</evidence>
<evidence type="ECO:0000269" key="6">
    <source>
    </source>
</evidence>
<evidence type="ECO:0000269" key="7">
    <source>
    </source>
</evidence>
<evidence type="ECO:0000269" key="8">
    <source>
    </source>
</evidence>
<evidence type="ECO:0000303" key="9">
    <source>
    </source>
</evidence>
<evidence type="ECO:0000303" key="10">
    <source>
    </source>
</evidence>
<evidence type="ECO:0000303" key="11">
    <source>
    </source>
</evidence>
<evidence type="ECO:0000303" key="12">
    <source>
    </source>
</evidence>
<evidence type="ECO:0000303" key="13">
    <source ref="6"/>
</evidence>
<evidence type="ECO:0000305" key="14"/>
<evidence type="ECO:0000312" key="15">
    <source>
        <dbReference type="EMBL" id="AAB88514.1"/>
    </source>
</evidence>
<evidence type="ECO:0000312" key="16">
    <source>
        <dbReference type="EMBL" id="AAB97169.1"/>
    </source>
</evidence>
<evidence type="ECO:0000312" key="17">
    <source>
        <dbReference type="EMBL" id="AAC47759.1"/>
    </source>
</evidence>
<evidence type="ECO:0000312" key="18">
    <source>
        <dbReference type="EMBL" id="AAN13474.1"/>
    </source>
</evidence>
<evidence type="ECO:0000312" key="19">
    <source>
        <dbReference type="EMBL" id="ABC86272.1"/>
    </source>
</evidence>
<evidence type="ECO:0000312" key="20">
    <source>
        <dbReference type="FlyBase" id="FBgn0001235"/>
    </source>
</evidence>
<comment type="function">
    <text evidence="4 5 6 7 8">All isoforms are required for patterning of the embryonic cuticle. Acts with exd to delimit the eye field and prevent inappropriate eye development. Isoforms that carry the homeodomain are required for proper localization of chordotonal organs within the peripheral nervous system and antennal identity; required to activate antennal-specific genes, such as sal and to repress the leg-like expression of dac. Necessary for the nuclear localization of the essential HOX cofactor, extradenticle (exd). Both necessary and sufficient for inner photoreceptors to adopt the polarization-sensitive 'dorsal rim area' (DRA) of the eye fate instead of the color-sensitive default state. This occurs by increasing rhabdomere size and uncoupling R7-R8 communication to allow both cells to express the same opsin rather than different ones as required for color vision.</text>
</comment>
<comment type="subunit">
    <text evidence="5 6 7 8">Interacts with exd; required for nuclear translocation of exd.</text>
</comment>
<comment type="interaction">
    <interactant intactId="EBI-137488">
        <id>O46339</id>
    </interactant>
    <interactant intactId="EBI-101537">
        <id>P40427</id>
        <label>exd</label>
    </interactant>
    <organismsDiffer>false</organismsDiffer>
    <experiments>16</experiments>
</comment>
<comment type="subcellular location">
    <subcellularLocation>
        <location evidence="2 6 7 8">Nucleus</location>
    </subcellularLocation>
</comment>
<comment type="alternative products">
    <event type="alternative splicing"/>
    <isoform>
        <id>O46339-1</id>
        <name evidence="5 7">C</name>
        <name evidence="7">hth1</name>
        <name evidence="5">HthFL</name>
        <sequence type="displayed"/>
    </isoform>
    <isoform>
        <id>O46339-2</id>
        <name evidence="7">A</name>
        <name evidence="7">hth2</name>
        <sequence type="described" ref="VSP_052826"/>
    </isoform>
    <isoform>
        <id>O46339-5</id>
        <name evidence="5">E</name>
        <name evidence="5">HDless 7'</name>
        <sequence type="described" ref="VSP_052822 VSP_052824"/>
    </isoform>
    <isoform>
        <id>O46339-6</id>
        <name evidence="5">F</name>
        <name evidence="5">HDless 6'</name>
        <name evidence="20">I</name>
        <sequence type="described" ref="VSP_052823 VSP_052824"/>
    </isoform>
    <isoform>
        <id>O46339-8</id>
        <name evidence="6">H</name>
        <sequence type="described" ref="VSP_052821 VSP_052826"/>
    </isoform>
</comment>
<comment type="tissue specificity">
    <text evidence="4 5 7">In the wing disk, the expression is present in the regions corresponding to notum, wing hinge and ventral pleura. In the leg disk, the expression is in the periphery region, corresponding to the proximal segments of the legs. In the antennal disk, the expression is in all but the arista region. In the eye disk, the expression is strong in the anterior region surrounding the eye field, including the regions corresponding to ptilinum, ocellus and head capsules, and weak in the posterior and lateral margins of the eye disk. Expressed specifically in maturating inner photoreceptors of the DRA and maintained through adulthood.</text>
</comment>
<comment type="developmental stage">
    <text evidence="5">Isoform C, isoform E and isoform F have very similar expression patterns during embryonic and larval stages, suggesting coexpression in the same tissues.</text>
</comment>
<comment type="disruption phenotype">
    <text evidence="6">Severe head defects, including a failure of head involution and transformation of the thoracic and abdominal segments into a more posterior identity.</text>
</comment>
<comment type="miscellaneous">
    <molecule>Isoform E</molecule>
    <text evidence="5">Protein lacks the homeodomain but is still capable of interacting with exd.</text>
</comment>
<comment type="miscellaneous">
    <molecule>Isoform F</molecule>
    <text evidence="5">Protein lacks the homeodomain but is still capable of interacting with exd.</text>
</comment>
<comment type="similarity">
    <text evidence="1">Belongs to the TALE/MEIS homeobox family.</text>
</comment>
<comment type="sequence caution" evidence="14">
    <conflict type="frameshift">
        <sequence resource="EMBL-CDS" id="AAQ23556"/>
    </conflict>
</comment>